<reference key="1">
    <citation type="journal article" date="2000" name="Nature">
        <title>Sequence and analysis of chromosome 3 of the plant Arabidopsis thaliana.</title>
        <authorList>
            <person name="Salanoubat M."/>
            <person name="Lemcke K."/>
            <person name="Rieger M."/>
            <person name="Ansorge W."/>
            <person name="Unseld M."/>
            <person name="Fartmann B."/>
            <person name="Valle G."/>
            <person name="Bloecker H."/>
            <person name="Perez-Alonso M."/>
            <person name="Obermaier B."/>
            <person name="Delseny M."/>
            <person name="Boutry M."/>
            <person name="Grivell L.A."/>
            <person name="Mache R."/>
            <person name="Puigdomenech P."/>
            <person name="De Simone V."/>
            <person name="Choisne N."/>
            <person name="Artiguenave F."/>
            <person name="Robert C."/>
            <person name="Brottier P."/>
            <person name="Wincker P."/>
            <person name="Cattolico L."/>
            <person name="Weissenbach J."/>
            <person name="Saurin W."/>
            <person name="Quetier F."/>
            <person name="Schaefer M."/>
            <person name="Mueller-Auer S."/>
            <person name="Gabel C."/>
            <person name="Fuchs M."/>
            <person name="Benes V."/>
            <person name="Wurmbach E."/>
            <person name="Drzonek H."/>
            <person name="Erfle H."/>
            <person name="Jordan N."/>
            <person name="Bangert S."/>
            <person name="Wiedelmann R."/>
            <person name="Kranz H."/>
            <person name="Voss H."/>
            <person name="Holland R."/>
            <person name="Brandt P."/>
            <person name="Nyakatura G."/>
            <person name="Vezzi A."/>
            <person name="D'Angelo M."/>
            <person name="Pallavicini A."/>
            <person name="Toppo S."/>
            <person name="Simionati B."/>
            <person name="Conrad A."/>
            <person name="Hornischer K."/>
            <person name="Kauer G."/>
            <person name="Loehnert T.-H."/>
            <person name="Nordsiek G."/>
            <person name="Reichelt J."/>
            <person name="Scharfe M."/>
            <person name="Schoen O."/>
            <person name="Bargues M."/>
            <person name="Terol J."/>
            <person name="Climent J."/>
            <person name="Navarro P."/>
            <person name="Collado C."/>
            <person name="Perez-Perez A."/>
            <person name="Ottenwaelder B."/>
            <person name="Duchemin D."/>
            <person name="Cooke R."/>
            <person name="Laudie M."/>
            <person name="Berger-Llauro C."/>
            <person name="Purnelle B."/>
            <person name="Masuy D."/>
            <person name="de Haan M."/>
            <person name="Maarse A.C."/>
            <person name="Alcaraz J.-P."/>
            <person name="Cottet A."/>
            <person name="Casacuberta E."/>
            <person name="Monfort A."/>
            <person name="Argiriou A."/>
            <person name="Flores M."/>
            <person name="Liguori R."/>
            <person name="Vitale D."/>
            <person name="Mannhaupt G."/>
            <person name="Haase D."/>
            <person name="Schoof H."/>
            <person name="Rudd S."/>
            <person name="Zaccaria P."/>
            <person name="Mewes H.-W."/>
            <person name="Mayer K.F.X."/>
            <person name="Kaul S."/>
            <person name="Town C.D."/>
            <person name="Koo H.L."/>
            <person name="Tallon L.J."/>
            <person name="Jenkins J."/>
            <person name="Rooney T."/>
            <person name="Rizzo M."/>
            <person name="Walts A."/>
            <person name="Utterback T."/>
            <person name="Fujii C.Y."/>
            <person name="Shea T.P."/>
            <person name="Creasy T.H."/>
            <person name="Haas B."/>
            <person name="Maiti R."/>
            <person name="Wu D."/>
            <person name="Peterson J."/>
            <person name="Van Aken S."/>
            <person name="Pai G."/>
            <person name="Militscher J."/>
            <person name="Sellers P."/>
            <person name="Gill J.E."/>
            <person name="Feldblyum T.V."/>
            <person name="Preuss D."/>
            <person name="Lin X."/>
            <person name="Nierman W.C."/>
            <person name="Salzberg S.L."/>
            <person name="White O."/>
            <person name="Venter J.C."/>
            <person name="Fraser C.M."/>
            <person name="Kaneko T."/>
            <person name="Nakamura Y."/>
            <person name="Sato S."/>
            <person name="Kato T."/>
            <person name="Asamizu E."/>
            <person name="Sasamoto S."/>
            <person name="Kimura T."/>
            <person name="Idesawa K."/>
            <person name="Kawashima K."/>
            <person name="Kishida Y."/>
            <person name="Kiyokawa C."/>
            <person name="Kohara M."/>
            <person name="Matsumoto M."/>
            <person name="Matsuno A."/>
            <person name="Muraki A."/>
            <person name="Nakayama S."/>
            <person name="Nakazaki N."/>
            <person name="Shinpo S."/>
            <person name="Takeuchi C."/>
            <person name="Wada T."/>
            <person name="Watanabe A."/>
            <person name="Yamada M."/>
            <person name="Yasuda M."/>
            <person name="Tabata S."/>
        </authorList>
    </citation>
    <scope>NUCLEOTIDE SEQUENCE [LARGE SCALE GENOMIC DNA]</scope>
    <source>
        <strain>cv. Columbia</strain>
    </source>
</reference>
<reference key="2">
    <citation type="journal article" date="2017" name="Plant J.">
        <title>Araport11: a complete reannotation of the Arabidopsis thaliana reference genome.</title>
        <authorList>
            <person name="Cheng C.Y."/>
            <person name="Krishnakumar V."/>
            <person name="Chan A.P."/>
            <person name="Thibaud-Nissen F."/>
            <person name="Schobel S."/>
            <person name="Town C.D."/>
        </authorList>
    </citation>
    <scope>GENOME REANNOTATION</scope>
    <source>
        <strain>cv. Columbia</strain>
    </source>
</reference>
<reference key="3">
    <citation type="journal article" date="2003" name="Science">
        <title>Empirical analysis of transcriptional activity in the Arabidopsis genome.</title>
        <authorList>
            <person name="Yamada K."/>
            <person name="Lim J."/>
            <person name="Dale J.M."/>
            <person name="Chen H."/>
            <person name="Shinn P."/>
            <person name="Palm C.J."/>
            <person name="Southwick A.M."/>
            <person name="Wu H.C."/>
            <person name="Kim C.J."/>
            <person name="Nguyen M."/>
            <person name="Pham P.K."/>
            <person name="Cheuk R.F."/>
            <person name="Karlin-Newmann G."/>
            <person name="Liu S.X."/>
            <person name="Lam B."/>
            <person name="Sakano H."/>
            <person name="Wu T."/>
            <person name="Yu G."/>
            <person name="Miranda M."/>
            <person name="Quach H.L."/>
            <person name="Tripp M."/>
            <person name="Chang C.H."/>
            <person name="Lee J.M."/>
            <person name="Toriumi M.J."/>
            <person name="Chan M.M."/>
            <person name="Tang C.C."/>
            <person name="Onodera C.S."/>
            <person name="Deng J.M."/>
            <person name="Akiyama K."/>
            <person name="Ansari Y."/>
            <person name="Arakawa T."/>
            <person name="Banh J."/>
            <person name="Banno F."/>
            <person name="Bowser L."/>
            <person name="Brooks S.Y."/>
            <person name="Carninci P."/>
            <person name="Chao Q."/>
            <person name="Choy N."/>
            <person name="Enju A."/>
            <person name="Goldsmith A.D."/>
            <person name="Gurjal M."/>
            <person name="Hansen N.F."/>
            <person name="Hayashizaki Y."/>
            <person name="Johnson-Hopson C."/>
            <person name="Hsuan V.W."/>
            <person name="Iida K."/>
            <person name="Karnes M."/>
            <person name="Khan S."/>
            <person name="Koesema E."/>
            <person name="Ishida J."/>
            <person name="Jiang P.X."/>
            <person name="Jones T."/>
            <person name="Kawai J."/>
            <person name="Kamiya A."/>
            <person name="Meyers C."/>
            <person name="Nakajima M."/>
            <person name="Narusaka M."/>
            <person name="Seki M."/>
            <person name="Sakurai T."/>
            <person name="Satou M."/>
            <person name="Tamse R."/>
            <person name="Vaysberg M."/>
            <person name="Wallender E.K."/>
            <person name="Wong C."/>
            <person name="Yamamura Y."/>
            <person name="Yuan S."/>
            <person name="Shinozaki K."/>
            <person name="Davis R.W."/>
            <person name="Theologis A."/>
            <person name="Ecker J.R."/>
        </authorList>
    </citation>
    <scope>NUCLEOTIDE SEQUENCE [LARGE SCALE MRNA]</scope>
    <source>
        <strain>cv. Columbia</strain>
    </source>
</reference>
<reference key="4">
    <citation type="journal article" date="2003" name="FEBS Lett.">
        <title>Identification of a mitochondrial glycerol-3-phosphate dehydrogenase from Arabidopsis thaliana: evidence for a mitochondrial glycerol-3-phosphate shuttle in plants.</title>
        <authorList>
            <person name="Shen W."/>
            <person name="Wei Y."/>
            <person name="Dauk M."/>
            <person name="Zheng Z."/>
            <person name="Zou J."/>
        </authorList>
    </citation>
    <scope>FUNCTION</scope>
    <scope>CATALYTIC ACTIVITY</scope>
    <scope>COFACTOR</scope>
    <scope>SUBCELLULAR LOCATION</scope>
    <scope>TISSUE SPECIFICITY</scope>
</reference>
<reference key="5">
    <citation type="journal article" date="2008" name="Plant Physiol.">
        <title>SUGAR-DEPENDENT6 encodes a mitochondrial flavin adenine dinucleotide-dependent glycerol-3-p dehydrogenase, which is required for glycerol catabolism and post germinative seedling growth in Arabidopsis.</title>
        <authorList>
            <person name="Quettier A.-L."/>
            <person name="Shaw E."/>
            <person name="Eastmond P.J."/>
        </authorList>
    </citation>
    <scope>FUNCTION</scope>
    <scope>CATALYTIC ACTIVITY</scope>
    <scope>MUTANTS SPD6-1 AND SPD6-2</scope>
</reference>
<proteinExistence type="evidence at protein level"/>
<keyword id="KW-0274">FAD</keyword>
<keyword id="KW-0285">Flavoprotein</keyword>
<keyword id="KW-0472">Membrane</keyword>
<keyword id="KW-0496">Mitochondrion</keyword>
<keyword id="KW-0999">Mitochondrion inner membrane</keyword>
<keyword id="KW-0560">Oxidoreductase</keyword>
<keyword id="KW-1185">Reference proteome</keyword>
<keyword id="KW-0809">Transit peptide</keyword>
<comment type="function">
    <text evidence="2 3">Required for glycerol catabolism and involved in NADH/NAD(+) homeostasis (PubMed:12586344, PubMed:18599644). Essential for postgerminative growth and seedling establishment (PubMed:18599644).</text>
</comment>
<comment type="catalytic activity">
    <reaction evidence="2 3">
        <text>a quinone + sn-glycerol 3-phosphate = dihydroxyacetone phosphate + a quinol</text>
        <dbReference type="Rhea" id="RHEA:18977"/>
        <dbReference type="ChEBI" id="CHEBI:24646"/>
        <dbReference type="ChEBI" id="CHEBI:57597"/>
        <dbReference type="ChEBI" id="CHEBI:57642"/>
        <dbReference type="ChEBI" id="CHEBI:132124"/>
        <dbReference type="EC" id="1.1.5.3"/>
    </reaction>
    <physiologicalReaction direction="left-to-right" evidence="2 3">
        <dbReference type="Rhea" id="RHEA:18978"/>
    </physiologicalReaction>
</comment>
<comment type="cofactor">
    <cofactor evidence="2">
        <name>FAD</name>
        <dbReference type="ChEBI" id="CHEBI:57692"/>
    </cofactor>
</comment>
<comment type="pathway">
    <text evidence="5">Polyol metabolism; glycerol degradation via glycerol kinase pathway; glycerone phosphate from sn-glycerol 3-phosphate (anaerobic route): step 1/1.</text>
</comment>
<comment type="subcellular location">
    <subcellularLocation>
        <location evidence="2">Mitochondrion inner membrane</location>
        <topology evidence="6">Peripheral membrane protein</topology>
    </subcellularLocation>
</comment>
<comment type="tissue specificity">
    <text evidence="2">Expressed in germinating seedlings. Also detected in roots, leaves, flowers, developing siliques and germinating seeds.</text>
</comment>
<comment type="miscellaneous">
    <text evidence="3">Plants lacking SDP6 are impaired in gluconeogenesis during postgerminative growth.</text>
</comment>
<comment type="similarity">
    <text evidence="5">Belongs to the FAD-dependent glycerol-3-phosphate dehydrogenase family.</text>
</comment>
<accession>Q9SS48</accession>
<gene>
    <name evidence="4" type="primary">SDP6</name>
    <name evidence="7" type="ordered locus">At3g10370</name>
    <name evidence="8" type="ORF">F14P13.3</name>
</gene>
<name>SDP6_ARATH</name>
<organism>
    <name type="scientific">Arabidopsis thaliana</name>
    <name type="common">Mouse-ear cress</name>
    <dbReference type="NCBI Taxonomy" id="3702"/>
    <lineage>
        <taxon>Eukaryota</taxon>
        <taxon>Viridiplantae</taxon>
        <taxon>Streptophyta</taxon>
        <taxon>Embryophyta</taxon>
        <taxon>Tracheophyta</taxon>
        <taxon>Spermatophyta</taxon>
        <taxon>Magnoliopsida</taxon>
        <taxon>eudicotyledons</taxon>
        <taxon>Gunneridae</taxon>
        <taxon>Pentapetalae</taxon>
        <taxon>rosids</taxon>
        <taxon>malvids</taxon>
        <taxon>Brassicales</taxon>
        <taxon>Brassicaceae</taxon>
        <taxon>Camelineae</taxon>
        <taxon>Arabidopsis</taxon>
    </lineage>
</organism>
<sequence length="629" mass="68451">MSLASIRRLAAGAAVIAAASGGAVYLSPSVASSDKGGGPILDSLRRRLGDPTASVPSRSAQESALIAATASDPLDVLVIGGGATGSGVALDAVTRGLRVGLVEREDFSSGTSSRSTKLIHGGVRYLEKAVFNLDYGQLKLVFHALEERKQLIENAPHLCHALPCMTPCFDWFEVIYFWMGLKMYDLVAGPRLLHLSRYYSAKESIELFPTLARKGKDKNLRGTVVYYDGQMNDSRLNVGLACTAALAGAAVLNHAEVVSLITDDATKRIIGARIRNNLTGQEFNSYAKVVVNAAGPFCDSIRKMIDEDTKPMICPSSGVHIVLPDYYSPEGMGLIVPKTKDGRVVFMLPWLGRTVAGTTDSNTSITSLPEPHEDEIQFILDAISDYLNIKVRRTDVLSAWSGIRPLAMDPTAKSTESISRDHVVFEENPGLVTITGGKWTTYRSMAEDAVDAAIKSGQLKPTNECVTQKLQLLGSYGWEPSSFTTLAQQYVRMKKTYGGKVVPGAMDTAAAKHLSHAYGSMADRVATIAQEEGLGKRLAHGHPFLEAEVAYCARHEYCESAVDFIARRCRIAFLDTDAAARALQRVVEILASEHKWDKSRQKQELQKAKEFLETFKSSKNAQFNDGKHN</sequence>
<evidence type="ECO:0000255" key="1"/>
<evidence type="ECO:0000269" key="2">
    <source>
    </source>
</evidence>
<evidence type="ECO:0000269" key="3">
    <source>
    </source>
</evidence>
<evidence type="ECO:0000303" key="4">
    <source>
    </source>
</evidence>
<evidence type="ECO:0000305" key="5"/>
<evidence type="ECO:0000305" key="6">
    <source>
    </source>
</evidence>
<evidence type="ECO:0000312" key="7">
    <source>
        <dbReference type="Araport" id="AT3G10370"/>
    </source>
</evidence>
<evidence type="ECO:0000312" key="8">
    <source>
        <dbReference type="EMBL" id="AAF02807.1"/>
    </source>
</evidence>
<feature type="transit peptide" description="Mitochondrion" evidence="1">
    <location>
        <begin position="1"/>
        <end position="48"/>
    </location>
</feature>
<feature type="chain" id="PRO_0000355965" description="Glycerol-3-phosphate dehydrogenase SDP6, mitochondrial">
    <location>
        <begin position="49"/>
        <end position="629"/>
    </location>
</feature>
<feature type="binding site" evidence="1">
    <location>
        <begin position="75"/>
        <end position="103"/>
    </location>
    <ligand>
        <name>FAD</name>
        <dbReference type="ChEBI" id="CHEBI:57692"/>
    </ligand>
</feature>
<feature type="mutagenesis site" description="In spd6-2; loss of 90% of activity." evidence="3">
    <original>S</original>
    <variation>F</variation>
    <location>
        <position position="86"/>
    </location>
</feature>
<feature type="mutagenesis site" description="In spd6-1; loss of 90% of activity." evidence="3">
    <original>E</original>
    <variation>G</variation>
    <location>
        <position position="546"/>
    </location>
</feature>
<protein>
    <recommendedName>
        <fullName evidence="4">Glycerol-3-phosphate dehydrogenase SDP6, mitochondrial</fullName>
        <ecNumber evidence="2 3">1.1.5.3</ecNumber>
    </recommendedName>
    <alternativeName>
        <fullName evidence="4">Protein SUGAR-DEPENDENT 6</fullName>
    </alternativeName>
</protein>
<dbReference type="EC" id="1.1.5.3" evidence="2 3"/>
<dbReference type="EMBL" id="AC009400">
    <property type="protein sequence ID" value="AAF02807.1"/>
    <property type="molecule type" value="Genomic_DNA"/>
</dbReference>
<dbReference type="EMBL" id="CP002686">
    <property type="protein sequence ID" value="AEE74897.1"/>
    <property type="molecule type" value="Genomic_DNA"/>
</dbReference>
<dbReference type="EMBL" id="AY063863">
    <property type="protein sequence ID" value="AAL36219.1"/>
    <property type="molecule type" value="mRNA"/>
</dbReference>
<dbReference type="EMBL" id="AY096363">
    <property type="protein sequence ID" value="AAM20004.1"/>
    <property type="molecule type" value="mRNA"/>
</dbReference>
<dbReference type="RefSeq" id="NP_187648.1">
    <property type="nucleotide sequence ID" value="NM_111872.6"/>
</dbReference>
<dbReference type="SMR" id="Q9SS48"/>
<dbReference type="BioGRID" id="5533">
    <property type="interactions" value="1"/>
</dbReference>
<dbReference type="FunCoup" id="Q9SS48">
    <property type="interactions" value="2567"/>
</dbReference>
<dbReference type="STRING" id="3702.Q9SS48"/>
<dbReference type="PaxDb" id="3702-AT3G10370.1"/>
<dbReference type="ProteomicsDB" id="234480"/>
<dbReference type="EnsemblPlants" id="AT3G10370.1">
    <property type="protein sequence ID" value="AT3G10370.1"/>
    <property type="gene ID" value="AT3G10370"/>
</dbReference>
<dbReference type="GeneID" id="820199"/>
<dbReference type="Gramene" id="AT3G10370.1">
    <property type="protein sequence ID" value="AT3G10370.1"/>
    <property type="gene ID" value="AT3G10370"/>
</dbReference>
<dbReference type="KEGG" id="ath:AT3G10370"/>
<dbReference type="Araport" id="AT3G10370"/>
<dbReference type="TAIR" id="AT3G10370">
    <property type="gene designation" value="SDP6"/>
</dbReference>
<dbReference type="eggNOG" id="KOG0042">
    <property type="taxonomic scope" value="Eukaryota"/>
</dbReference>
<dbReference type="HOGENOM" id="CLU_015740_4_3_1"/>
<dbReference type="InParanoid" id="Q9SS48"/>
<dbReference type="OMA" id="PHIVKPM"/>
<dbReference type="OrthoDB" id="264015at2759"/>
<dbReference type="PhylomeDB" id="Q9SS48"/>
<dbReference type="BioCyc" id="ARA:AT3G10370-MONOMER"/>
<dbReference type="BioCyc" id="MetaCyc:AT3G10370-MONOMER"/>
<dbReference type="UniPathway" id="UPA00618">
    <property type="reaction ID" value="UER00673"/>
</dbReference>
<dbReference type="PRO" id="PR:Q9SS48"/>
<dbReference type="Proteomes" id="UP000006548">
    <property type="component" value="Chromosome 3"/>
</dbReference>
<dbReference type="ExpressionAtlas" id="Q9SS48">
    <property type="expression patterns" value="baseline and differential"/>
</dbReference>
<dbReference type="GO" id="GO:0005829">
    <property type="term" value="C:cytosol"/>
    <property type="evidence" value="ECO:0007005"/>
    <property type="project" value="TAIR"/>
</dbReference>
<dbReference type="GO" id="GO:0005743">
    <property type="term" value="C:mitochondrial inner membrane"/>
    <property type="evidence" value="ECO:0007669"/>
    <property type="project" value="UniProtKB-SubCell"/>
</dbReference>
<dbReference type="GO" id="GO:0005739">
    <property type="term" value="C:mitochondrion"/>
    <property type="evidence" value="ECO:0007005"/>
    <property type="project" value="TAIR"/>
</dbReference>
<dbReference type="GO" id="GO:0004368">
    <property type="term" value="F:glycerol-3-phosphate dehydrogenase (quinone) activity"/>
    <property type="evidence" value="ECO:0000314"/>
    <property type="project" value="TAIR"/>
</dbReference>
<dbReference type="GO" id="GO:0019563">
    <property type="term" value="P:glycerol catabolic process"/>
    <property type="evidence" value="ECO:0000315"/>
    <property type="project" value="TAIR"/>
</dbReference>
<dbReference type="GO" id="GO:0006072">
    <property type="term" value="P:glycerol-3-phosphate metabolic process"/>
    <property type="evidence" value="ECO:0007669"/>
    <property type="project" value="InterPro"/>
</dbReference>
<dbReference type="GO" id="GO:0006127">
    <property type="term" value="P:glycerol-3-phosphate shuttle"/>
    <property type="evidence" value="ECO:0000315"/>
    <property type="project" value="TAIR"/>
</dbReference>
<dbReference type="FunFam" id="1.10.8.870:FF:000004">
    <property type="entry name" value="Glycerol-3-phosphate dehydrogenase"/>
    <property type="match status" value="1"/>
</dbReference>
<dbReference type="Gene3D" id="1.10.8.870">
    <property type="entry name" value="Alpha-glycerophosphate oxidase, cap domain"/>
    <property type="match status" value="1"/>
</dbReference>
<dbReference type="Gene3D" id="3.30.9.10">
    <property type="entry name" value="D-Amino Acid Oxidase, subunit A, domain 2"/>
    <property type="match status" value="1"/>
</dbReference>
<dbReference type="Gene3D" id="3.50.50.60">
    <property type="entry name" value="FAD/NAD(P)-binding domain"/>
    <property type="match status" value="1"/>
</dbReference>
<dbReference type="InterPro" id="IPR031656">
    <property type="entry name" value="DAO_C"/>
</dbReference>
<dbReference type="InterPro" id="IPR038299">
    <property type="entry name" value="DAO_C_sf"/>
</dbReference>
<dbReference type="InterPro" id="IPR006076">
    <property type="entry name" value="FAD-dep_OxRdtase"/>
</dbReference>
<dbReference type="InterPro" id="IPR036188">
    <property type="entry name" value="FAD/NAD-bd_sf"/>
</dbReference>
<dbReference type="InterPro" id="IPR000447">
    <property type="entry name" value="G3P_DH_FAD-dep"/>
</dbReference>
<dbReference type="PANTHER" id="PTHR11985">
    <property type="entry name" value="GLYCEROL-3-PHOSPHATE DEHYDROGENASE"/>
    <property type="match status" value="1"/>
</dbReference>
<dbReference type="PANTHER" id="PTHR11985:SF15">
    <property type="entry name" value="GLYCEROL-3-PHOSPHATE DEHYDROGENASE, MITOCHONDRIAL"/>
    <property type="match status" value="1"/>
</dbReference>
<dbReference type="Pfam" id="PF01266">
    <property type="entry name" value="DAO"/>
    <property type="match status" value="1"/>
</dbReference>
<dbReference type="Pfam" id="PF16901">
    <property type="entry name" value="DAO_C"/>
    <property type="match status" value="1"/>
</dbReference>
<dbReference type="PRINTS" id="PR01001">
    <property type="entry name" value="FADG3PDH"/>
</dbReference>
<dbReference type="SUPFAM" id="SSF54373">
    <property type="entry name" value="FAD-linked reductases, C-terminal domain"/>
    <property type="match status" value="1"/>
</dbReference>
<dbReference type="SUPFAM" id="SSF51905">
    <property type="entry name" value="FAD/NAD(P)-binding domain"/>
    <property type="match status" value="1"/>
</dbReference>
<dbReference type="PROSITE" id="PS00977">
    <property type="entry name" value="FAD_G3PDH_1"/>
    <property type="match status" value="1"/>
</dbReference>
<dbReference type="PROSITE" id="PS00978">
    <property type="entry name" value="FAD_G3PDH_2"/>
    <property type="match status" value="1"/>
</dbReference>